<sequence>MPADTRPAAIVLMGPTASGKSQLAIDIAKRWGGEVISVDSVLVYRGLDIGTAKPNAAMRASVPHHLIDICEPWETYSAADFAHDARAAIDMIVRRGALPILTGGTGLYFRALLAGLSDMPPAHPEIRAMIAAEAKRDSWAALHTRLAEVDAITAARIHATDPQRIQRALEVYLVSGQSMSDWQNQPPKQRLPLRVLKLVLAPTHRKVLHFRIAQRFKAMLDNGLLAEVNALRTHPSIHAMARPLDLPAMRAVGYRQCWEHLDGMYTAEMLYQRSVAATRQLAKRQLTWLRGELDALWFDPEHDQSRIEKVMEAFLNR</sequence>
<protein>
    <recommendedName>
        <fullName evidence="1">tRNA dimethylallyltransferase</fullName>
        <ecNumber evidence="1">2.5.1.75</ecNumber>
    </recommendedName>
    <alternativeName>
        <fullName evidence="1">Dimethylallyl diphosphate:tRNA dimethylallyltransferase</fullName>
        <shortName evidence="1">DMAPP:tRNA dimethylallyltransferase</shortName>
        <shortName evidence="1">DMATase</shortName>
    </alternativeName>
    <alternativeName>
        <fullName evidence="1">Isopentenyl-diphosphate:tRNA isopentenyltransferase</fullName>
        <shortName evidence="1">IPP transferase</shortName>
        <shortName evidence="1">IPPT</shortName>
        <shortName evidence="1">IPTase</shortName>
    </alternativeName>
</protein>
<gene>
    <name evidence="1" type="primary">miaA</name>
    <name type="ordered locus">XfasM23_0059</name>
</gene>
<feature type="chain" id="PRO_1000098703" description="tRNA dimethylallyltransferase">
    <location>
        <begin position="1"/>
        <end position="317"/>
    </location>
</feature>
<feature type="region of interest" description="Interaction with substrate tRNA" evidence="1">
    <location>
        <begin position="39"/>
        <end position="42"/>
    </location>
</feature>
<feature type="region of interest" description="Interaction with substrate tRNA" evidence="1">
    <location>
        <begin position="163"/>
        <end position="167"/>
    </location>
</feature>
<feature type="binding site" evidence="1">
    <location>
        <begin position="14"/>
        <end position="21"/>
    </location>
    <ligand>
        <name>ATP</name>
        <dbReference type="ChEBI" id="CHEBI:30616"/>
    </ligand>
</feature>
<feature type="binding site" evidence="1">
    <location>
        <begin position="16"/>
        <end position="21"/>
    </location>
    <ligand>
        <name>substrate</name>
    </ligand>
</feature>
<feature type="site" description="Interaction with substrate tRNA" evidence="1">
    <location>
        <position position="105"/>
    </location>
</feature>
<feature type="site" description="Interaction with substrate tRNA" evidence="1">
    <location>
        <position position="127"/>
    </location>
</feature>
<organism>
    <name type="scientific">Xylella fastidiosa (strain M23)</name>
    <dbReference type="NCBI Taxonomy" id="405441"/>
    <lineage>
        <taxon>Bacteria</taxon>
        <taxon>Pseudomonadati</taxon>
        <taxon>Pseudomonadota</taxon>
        <taxon>Gammaproteobacteria</taxon>
        <taxon>Lysobacterales</taxon>
        <taxon>Lysobacteraceae</taxon>
        <taxon>Xylella</taxon>
    </lineage>
</organism>
<accession>B2I692</accession>
<keyword id="KW-0067">ATP-binding</keyword>
<keyword id="KW-0460">Magnesium</keyword>
<keyword id="KW-0547">Nucleotide-binding</keyword>
<keyword id="KW-0808">Transferase</keyword>
<keyword id="KW-0819">tRNA processing</keyword>
<comment type="function">
    <text evidence="1">Catalyzes the transfer of a dimethylallyl group onto the adenine at position 37 in tRNAs that read codons beginning with uridine, leading to the formation of N6-(dimethylallyl)adenosine (i(6)A).</text>
</comment>
<comment type="catalytic activity">
    <reaction evidence="1">
        <text>adenosine(37) in tRNA + dimethylallyl diphosphate = N(6)-dimethylallyladenosine(37) in tRNA + diphosphate</text>
        <dbReference type="Rhea" id="RHEA:26482"/>
        <dbReference type="Rhea" id="RHEA-COMP:10162"/>
        <dbReference type="Rhea" id="RHEA-COMP:10375"/>
        <dbReference type="ChEBI" id="CHEBI:33019"/>
        <dbReference type="ChEBI" id="CHEBI:57623"/>
        <dbReference type="ChEBI" id="CHEBI:74411"/>
        <dbReference type="ChEBI" id="CHEBI:74415"/>
        <dbReference type="EC" id="2.5.1.75"/>
    </reaction>
</comment>
<comment type="cofactor">
    <cofactor evidence="1">
        <name>Mg(2+)</name>
        <dbReference type="ChEBI" id="CHEBI:18420"/>
    </cofactor>
</comment>
<comment type="subunit">
    <text evidence="1">Monomer.</text>
</comment>
<comment type="similarity">
    <text evidence="1">Belongs to the IPP transferase family.</text>
</comment>
<name>MIAA_XYLF2</name>
<dbReference type="EC" id="2.5.1.75" evidence="1"/>
<dbReference type="EMBL" id="CP001011">
    <property type="protein sequence ID" value="ACB91516.1"/>
    <property type="molecule type" value="Genomic_DNA"/>
</dbReference>
<dbReference type="RefSeq" id="WP_004087674.1">
    <property type="nucleotide sequence ID" value="NC_010577.1"/>
</dbReference>
<dbReference type="SMR" id="B2I692"/>
<dbReference type="GeneID" id="93903759"/>
<dbReference type="KEGG" id="xfn:XfasM23_0059"/>
<dbReference type="HOGENOM" id="CLU_032616_0_0_6"/>
<dbReference type="Proteomes" id="UP000001698">
    <property type="component" value="Chromosome"/>
</dbReference>
<dbReference type="GO" id="GO:0005524">
    <property type="term" value="F:ATP binding"/>
    <property type="evidence" value="ECO:0007669"/>
    <property type="project" value="UniProtKB-UniRule"/>
</dbReference>
<dbReference type="GO" id="GO:0052381">
    <property type="term" value="F:tRNA dimethylallyltransferase activity"/>
    <property type="evidence" value="ECO:0007669"/>
    <property type="project" value="UniProtKB-UniRule"/>
</dbReference>
<dbReference type="GO" id="GO:0006400">
    <property type="term" value="P:tRNA modification"/>
    <property type="evidence" value="ECO:0007669"/>
    <property type="project" value="TreeGrafter"/>
</dbReference>
<dbReference type="FunFam" id="1.10.20.140:FF:000001">
    <property type="entry name" value="tRNA dimethylallyltransferase"/>
    <property type="match status" value="1"/>
</dbReference>
<dbReference type="Gene3D" id="1.10.20.140">
    <property type="match status" value="1"/>
</dbReference>
<dbReference type="Gene3D" id="3.40.50.300">
    <property type="entry name" value="P-loop containing nucleotide triphosphate hydrolases"/>
    <property type="match status" value="1"/>
</dbReference>
<dbReference type="HAMAP" id="MF_00185">
    <property type="entry name" value="IPP_trans"/>
    <property type="match status" value="1"/>
</dbReference>
<dbReference type="InterPro" id="IPR039657">
    <property type="entry name" value="Dimethylallyltransferase"/>
</dbReference>
<dbReference type="InterPro" id="IPR018022">
    <property type="entry name" value="IPT"/>
</dbReference>
<dbReference type="InterPro" id="IPR027417">
    <property type="entry name" value="P-loop_NTPase"/>
</dbReference>
<dbReference type="NCBIfam" id="TIGR00174">
    <property type="entry name" value="miaA"/>
    <property type="match status" value="1"/>
</dbReference>
<dbReference type="PANTHER" id="PTHR11088">
    <property type="entry name" value="TRNA DIMETHYLALLYLTRANSFERASE"/>
    <property type="match status" value="1"/>
</dbReference>
<dbReference type="PANTHER" id="PTHR11088:SF60">
    <property type="entry name" value="TRNA DIMETHYLALLYLTRANSFERASE"/>
    <property type="match status" value="1"/>
</dbReference>
<dbReference type="Pfam" id="PF01715">
    <property type="entry name" value="IPPT"/>
    <property type="match status" value="1"/>
</dbReference>
<dbReference type="SUPFAM" id="SSF52540">
    <property type="entry name" value="P-loop containing nucleoside triphosphate hydrolases"/>
    <property type="match status" value="1"/>
</dbReference>
<reference key="1">
    <citation type="journal article" date="2010" name="J. Bacteriol.">
        <title>Whole genome sequences of two Xylella fastidiosa strains (M12 and M23) causing almond leaf scorch disease in California.</title>
        <authorList>
            <person name="Chen J."/>
            <person name="Xie G."/>
            <person name="Han S."/>
            <person name="Chertkov O."/>
            <person name="Sims D."/>
            <person name="Civerolo E.L."/>
        </authorList>
    </citation>
    <scope>NUCLEOTIDE SEQUENCE [LARGE SCALE GENOMIC DNA]</scope>
    <source>
        <strain>M23</strain>
    </source>
</reference>
<evidence type="ECO:0000255" key="1">
    <source>
        <dbReference type="HAMAP-Rule" id="MF_00185"/>
    </source>
</evidence>
<proteinExistence type="inferred from homology"/>